<dbReference type="EC" id="1.-.-.-" evidence="7"/>
<dbReference type="EMBL" id="MDYM01000002">
    <property type="protein sequence ID" value="OQD69870.1"/>
    <property type="molecule type" value="Genomic_DNA"/>
</dbReference>
<dbReference type="SMR" id="A0A1V6NZ11"/>
<dbReference type="STRING" id="60169.A0A1V6NZ11"/>
<dbReference type="GlyCosmos" id="A0A1V6NZ11">
    <property type="glycosylation" value="1 site, No reported glycans"/>
</dbReference>
<dbReference type="OrthoDB" id="32729at5073"/>
<dbReference type="UniPathway" id="UPA00213"/>
<dbReference type="Proteomes" id="UP000191408">
    <property type="component" value="Unassembled WGS sequence"/>
</dbReference>
<dbReference type="GO" id="GO:0016020">
    <property type="term" value="C:membrane"/>
    <property type="evidence" value="ECO:0007669"/>
    <property type="project" value="UniProtKB-SubCell"/>
</dbReference>
<dbReference type="GO" id="GO:0071949">
    <property type="term" value="F:FAD binding"/>
    <property type="evidence" value="ECO:0007669"/>
    <property type="project" value="InterPro"/>
</dbReference>
<dbReference type="GO" id="GO:0004497">
    <property type="term" value="F:monooxygenase activity"/>
    <property type="evidence" value="ECO:0007669"/>
    <property type="project" value="InterPro"/>
</dbReference>
<dbReference type="GO" id="GO:0016114">
    <property type="term" value="P:terpenoid biosynthetic process"/>
    <property type="evidence" value="ECO:0007669"/>
    <property type="project" value="UniProtKB-UniPathway"/>
</dbReference>
<dbReference type="Gene3D" id="3.50.50.60">
    <property type="entry name" value="FAD/NAD(P)-binding domain"/>
    <property type="match status" value="1"/>
</dbReference>
<dbReference type="InterPro" id="IPR002938">
    <property type="entry name" value="FAD-bd"/>
</dbReference>
<dbReference type="InterPro" id="IPR036188">
    <property type="entry name" value="FAD/NAD-bd_sf"/>
</dbReference>
<dbReference type="InterPro" id="IPR050562">
    <property type="entry name" value="FAD_mOase_fung"/>
</dbReference>
<dbReference type="PANTHER" id="PTHR47356:SF2">
    <property type="entry name" value="FAD-BINDING DOMAIN-CONTAINING PROTEIN-RELATED"/>
    <property type="match status" value="1"/>
</dbReference>
<dbReference type="PANTHER" id="PTHR47356">
    <property type="entry name" value="FAD-DEPENDENT MONOOXYGENASE ASQG-RELATED"/>
    <property type="match status" value="1"/>
</dbReference>
<dbReference type="Pfam" id="PF01494">
    <property type="entry name" value="FAD_binding_3"/>
    <property type="match status" value="1"/>
</dbReference>
<dbReference type="PRINTS" id="PR00420">
    <property type="entry name" value="RNGMNOXGNASE"/>
</dbReference>
<dbReference type="SUPFAM" id="SSF51905">
    <property type="entry name" value="FAD/NAD(P)-binding domain"/>
    <property type="match status" value="1"/>
</dbReference>
<organism>
    <name type="scientific">Penicillium polonicum</name>
    <dbReference type="NCBI Taxonomy" id="60169"/>
    <lineage>
        <taxon>Eukaryota</taxon>
        <taxon>Fungi</taxon>
        <taxon>Dikarya</taxon>
        <taxon>Ascomycota</taxon>
        <taxon>Pezizomycotina</taxon>
        <taxon>Eurotiomycetes</taxon>
        <taxon>Eurotiomycetidae</taxon>
        <taxon>Eurotiales</taxon>
        <taxon>Aspergillaceae</taxon>
        <taxon>Penicillium</taxon>
    </lineage>
</organism>
<evidence type="ECO:0000250" key="1">
    <source>
        <dbReference type="UniProtKB" id="B8M9J8"/>
    </source>
</evidence>
<evidence type="ECO:0000255" key="2"/>
<evidence type="ECO:0000255" key="3">
    <source>
        <dbReference type="PROSITE-ProRule" id="PRU00498"/>
    </source>
</evidence>
<evidence type="ECO:0000269" key="4">
    <source>
    </source>
</evidence>
<evidence type="ECO:0000303" key="5">
    <source>
    </source>
</evidence>
<evidence type="ECO:0000305" key="6"/>
<evidence type="ECO:0000305" key="7">
    <source>
    </source>
</evidence>
<protein>
    <recommendedName>
        <fullName evidence="5">FAD-dependent monooxygenase verC2</fullName>
        <ecNumber evidence="7">1.-.-.-</ecNumber>
    </recommendedName>
    <alternativeName>
        <fullName evidence="5">Cluster 4 protein C2</fullName>
    </alternativeName>
    <alternativeName>
        <fullName evidence="5">Verrucosidin biosynthesis cluster protein C2</fullName>
    </alternativeName>
</protein>
<sequence>MLCWELANRRKRIGPNRFGFPIAILTRQQLIEVLYTALSDKSKVKTGKKVVRIESEERRITTWTEDGSEYEGELVVGADGVHSVTRSEMWRAADNQQPGFIQEEEKYSLSAEYSCIWGLSTPVPGIRQGEQIIRSYDRLTFLIFPSQNGCLGWFAIQKLNRKHVYPDIRPFSQKDTLARCEALRDLPIWNDVKFGDLLTLTEVCAMTPLEENLFQTWNYGRILCIGDSISKLTPNIAQGANTAIEGAAAVANGLHQLLHHNGLNQPSYDEIQEVLGRYSQSQRKRMKKLHWISHMVTRLQSREGLINKFVGRYIYSHTGNSTFYLTGKMIAQGPVLNYLSTPKEIEIGLRASFDQYGKDGGDMPWKTTIMFIALLTIVVLIYSFI</sequence>
<proteinExistence type="inferred from homology"/>
<accession>A0A1V6NZ11</accession>
<keyword id="KW-0274">FAD</keyword>
<keyword id="KW-0285">Flavoprotein</keyword>
<keyword id="KW-0325">Glycoprotein</keyword>
<keyword id="KW-0472">Membrane</keyword>
<keyword id="KW-0560">Oxidoreductase</keyword>
<keyword id="KW-1185">Reference proteome</keyword>
<keyword id="KW-0812">Transmembrane</keyword>
<keyword id="KW-1133">Transmembrane helix</keyword>
<name>VERC2_PENPO</name>
<reference key="1">
    <citation type="journal article" date="2017" name="Nat. Microbiol.">
        <title>Global analysis of biosynthetic gene clusters reveals vast potential of secondary metabolite production in Penicillium species.</title>
        <authorList>
            <person name="Nielsen J.C."/>
            <person name="Grijseels S."/>
            <person name="Prigent S."/>
            <person name="Ji B."/>
            <person name="Dainat J."/>
            <person name="Nielsen K.F."/>
            <person name="Frisvad J.C."/>
            <person name="Workman M."/>
            <person name="Nielsen J."/>
        </authorList>
    </citation>
    <scope>NUCLEOTIDE SEQUENCE [LARGE SCALE GENOMIC DNA]</scope>
    <source>
        <strain>IBT 4502</strain>
    </source>
</reference>
<reference key="2">
    <citation type="journal article" date="2021" name="Front. Microbiol.">
        <title>CRISPR-Cas9-Based Discovery of the Verrucosidin Biosynthesis Gene Cluster in Penicillium polonicum.</title>
        <authorList>
            <person name="Valente S."/>
            <person name="Piombo E."/>
            <person name="Schroeckh V."/>
            <person name="Meloni G.R."/>
            <person name="Heinekamp T."/>
            <person name="Brakhage A.A."/>
            <person name="Spadaro D."/>
        </authorList>
    </citation>
    <scope>FUNCTION</scope>
</reference>
<feature type="chain" id="PRO_0000455360" description="FAD-dependent monooxygenase verC2">
    <location>
        <begin position="1"/>
        <end position="385"/>
    </location>
</feature>
<feature type="transmembrane region" description="Helical" evidence="2">
    <location>
        <begin position="365"/>
        <end position="385"/>
    </location>
</feature>
<feature type="binding site" evidence="1">
    <location>
        <position position="27"/>
    </location>
    <ligand>
        <name>FAD</name>
        <dbReference type="ChEBI" id="CHEBI:57692"/>
    </ligand>
</feature>
<feature type="binding site" evidence="1">
    <location>
        <position position="227"/>
    </location>
    <ligand>
        <name>FAD</name>
        <dbReference type="ChEBI" id="CHEBI:57692"/>
    </ligand>
</feature>
<feature type="binding site" evidence="1">
    <location>
        <position position="240"/>
    </location>
    <ligand>
        <name>FAD</name>
        <dbReference type="ChEBI" id="CHEBI:57692"/>
    </ligand>
</feature>
<feature type="glycosylation site" description="N-linked (GlcNAc...) asparagine" evidence="3">
    <location>
        <position position="320"/>
    </location>
</feature>
<gene>
    <name evidence="5" type="primary">verC2</name>
    <name evidence="5" type="synonym">cl4C2</name>
    <name type="ORF">PENPOL_c002G07909</name>
</gene>
<comment type="function">
    <text evidence="4 7">FAD-dependent monooxygenase; part of the gene cluster that mediates the biosynthesis of the neurotoxin verrucosidin, a methylated alpha-pyrone polyketide that inhibits oxidative phosphorylation in mitochondria and thereby causes neurological diseases (PubMed:34093475). The carbon backbone of verrucosidin is synthesized by the HR-PKS verA, and further modified by the other verrucodidin cluster enzymes (Probable).</text>
</comment>
<comment type="cofactor">
    <cofactor evidence="6">
        <name>FAD</name>
        <dbReference type="ChEBI" id="CHEBI:57692"/>
    </cofactor>
</comment>
<comment type="pathway">
    <text evidence="7">Secondary metabolite biosynthesis; terpenoid biosynthesis.</text>
</comment>
<comment type="pathway">
    <text evidence="7">Mycotoxin biosynthesis.</text>
</comment>
<comment type="subcellular location">
    <subcellularLocation>
        <location evidence="2">Membrane</location>
        <topology evidence="2">Single-pass membrane protein</topology>
    </subcellularLocation>
</comment>
<comment type="similarity">
    <text evidence="6">Belongs to the paxM FAD-dependent monooxygenase family.</text>
</comment>